<organism>
    <name type="scientific">Pseudothermotoga lettingae (strain ATCC BAA-301 / DSM 14385 / NBRC 107922 / TMO)</name>
    <name type="common">Thermotoga lettingae</name>
    <dbReference type="NCBI Taxonomy" id="416591"/>
    <lineage>
        <taxon>Bacteria</taxon>
        <taxon>Thermotogati</taxon>
        <taxon>Thermotogota</taxon>
        <taxon>Thermotogae</taxon>
        <taxon>Thermotogales</taxon>
        <taxon>Thermotogaceae</taxon>
        <taxon>Pseudothermotoga</taxon>
    </lineage>
</organism>
<reference key="1">
    <citation type="submission" date="2007-08" db="EMBL/GenBank/DDBJ databases">
        <title>Complete sequence of Thermotoga lettingae TMO.</title>
        <authorList>
            <consortium name="US DOE Joint Genome Institute"/>
            <person name="Copeland A."/>
            <person name="Lucas S."/>
            <person name="Lapidus A."/>
            <person name="Barry K."/>
            <person name="Glavina del Rio T."/>
            <person name="Dalin E."/>
            <person name="Tice H."/>
            <person name="Pitluck S."/>
            <person name="Foster B."/>
            <person name="Bruce D."/>
            <person name="Schmutz J."/>
            <person name="Larimer F."/>
            <person name="Land M."/>
            <person name="Hauser L."/>
            <person name="Kyrpides N."/>
            <person name="Mikhailova N."/>
            <person name="Nelson K."/>
            <person name="Gogarten J.P."/>
            <person name="Noll K."/>
            <person name="Richardson P."/>
        </authorList>
    </citation>
    <scope>NUCLEOTIDE SEQUENCE [LARGE SCALE GENOMIC DNA]</scope>
    <source>
        <strain>ATCC BAA-301 / DSM 14385 / NBRC 107922 / TMO</strain>
    </source>
</reference>
<comment type="function">
    <text evidence="1">One of the early assembly proteins it binds 23S rRNA. One of the proteins that surrounds the polypeptide exit tunnel on the outside of the ribosome. Forms the main docking site for trigger factor binding to the ribosome.</text>
</comment>
<comment type="subunit">
    <text evidence="1">Part of the 50S ribosomal subunit. Contacts protein L29, and trigger factor when it is bound to the ribosome.</text>
</comment>
<comment type="similarity">
    <text evidence="1">Belongs to the universal ribosomal protein uL23 family.</text>
</comment>
<evidence type="ECO:0000255" key="1">
    <source>
        <dbReference type="HAMAP-Rule" id="MF_01369"/>
    </source>
</evidence>
<evidence type="ECO:0000305" key="2"/>
<keyword id="KW-1185">Reference proteome</keyword>
<keyword id="KW-0687">Ribonucleoprotein</keyword>
<keyword id="KW-0689">Ribosomal protein</keyword>
<keyword id="KW-0694">RNA-binding</keyword>
<keyword id="KW-0699">rRNA-binding</keyword>
<protein>
    <recommendedName>
        <fullName evidence="1">Large ribosomal subunit protein uL23</fullName>
    </recommendedName>
    <alternativeName>
        <fullName evidence="2">50S ribosomal protein L23</fullName>
    </alternativeName>
</protein>
<name>RL23_PSELT</name>
<feature type="chain" id="PRO_1000068180" description="Large ribosomal subunit protein uL23">
    <location>
        <begin position="1"/>
        <end position="100"/>
    </location>
</feature>
<proteinExistence type="inferred from homology"/>
<accession>A8F4R3</accession>
<sequence length="100" mass="11773">MNQQKLTHYDILIKPITTEKTMLDREKRKYVFEVNVLSNKALVKNAVESLFNVKVEKVNISLVKPKPKRRGRFEGKTRRWKKAVVTLKEGYTIKELEGQQ</sequence>
<gene>
    <name evidence="1" type="primary">rplW</name>
    <name type="ordered locus">Tlet_0581</name>
</gene>
<dbReference type="EMBL" id="CP000812">
    <property type="protein sequence ID" value="ABV33147.1"/>
    <property type="molecule type" value="Genomic_DNA"/>
</dbReference>
<dbReference type="RefSeq" id="WP_012002628.1">
    <property type="nucleotide sequence ID" value="NZ_BSDV01000001.1"/>
</dbReference>
<dbReference type="SMR" id="A8F4R3"/>
<dbReference type="STRING" id="416591.Tlet_0581"/>
<dbReference type="KEGG" id="tle:Tlet_0581"/>
<dbReference type="eggNOG" id="COG0089">
    <property type="taxonomic scope" value="Bacteria"/>
</dbReference>
<dbReference type="HOGENOM" id="CLU_037562_3_2_0"/>
<dbReference type="OrthoDB" id="9793353at2"/>
<dbReference type="Proteomes" id="UP000002016">
    <property type="component" value="Chromosome"/>
</dbReference>
<dbReference type="GO" id="GO:1990904">
    <property type="term" value="C:ribonucleoprotein complex"/>
    <property type="evidence" value="ECO:0007669"/>
    <property type="project" value="UniProtKB-KW"/>
</dbReference>
<dbReference type="GO" id="GO:0005840">
    <property type="term" value="C:ribosome"/>
    <property type="evidence" value="ECO:0007669"/>
    <property type="project" value="UniProtKB-KW"/>
</dbReference>
<dbReference type="GO" id="GO:0019843">
    <property type="term" value="F:rRNA binding"/>
    <property type="evidence" value="ECO:0007669"/>
    <property type="project" value="UniProtKB-UniRule"/>
</dbReference>
<dbReference type="GO" id="GO:0003735">
    <property type="term" value="F:structural constituent of ribosome"/>
    <property type="evidence" value="ECO:0007669"/>
    <property type="project" value="InterPro"/>
</dbReference>
<dbReference type="GO" id="GO:0006412">
    <property type="term" value="P:translation"/>
    <property type="evidence" value="ECO:0007669"/>
    <property type="project" value="UniProtKB-UniRule"/>
</dbReference>
<dbReference type="FunFam" id="3.30.70.330:FF:000001">
    <property type="entry name" value="50S ribosomal protein L23"/>
    <property type="match status" value="1"/>
</dbReference>
<dbReference type="Gene3D" id="3.30.70.330">
    <property type="match status" value="1"/>
</dbReference>
<dbReference type="HAMAP" id="MF_01369_B">
    <property type="entry name" value="Ribosomal_uL23_B"/>
    <property type="match status" value="1"/>
</dbReference>
<dbReference type="InterPro" id="IPR012677">
    <property type="entry name" value="Nucleotide-bd_a/b_plait_sf"/>
</dbReference>
<dbReference type="InterPro" id="IPR013025">
    <property type="entry name" value="Ribosomal_uL23-like"/>
</dbReference>
<dbReference type="InterPro" id="IPR012678">
    <property type="entry name" value="Ribosomal_uL23/eL15/eS24_sf"/>
</dbReference>
<dbReference type="InterPro" id="IPR001014">
    <property type="entry name" value="Ribosomal_uL23_CS"/>
</dbReference>
<dbReference type="NCBIfam" id="NF004363">
    <property type="entry name" value="PRK05738.2-4"/>
    <property type="match status" value="1"/>
</dbReference>
<dbReference type="PANTHER" id="PTHR11620">
    <property type="entry name" value="60S RIBOSOMAL PROTEIN L23A"/>
    <property type="match status" value="1"/>
</dbReference>
<dbReference type="Pfam" id="PF00276">
    <property type="entry name" value="Ribosomal_L23"/>
    <property type="match status" value="1"/>
</dbReference>
<dbReference type="SUPFAM" id="SSF54189">
    <property type="entry name" value="Ribosomal proteins S24e, L23 and L15e"/>
    <property type="match status" value="1"/>
</dbReference>
<dbReference type="PROSITE" id="PS00050">
    <property type="entry name" value="RIBOSOMAL_L23"/>
    <property type="match status" value="1"/>
</dbReference>